<keyword id="KW-0687">Ribonucleoprotein</keyword>
<keyword id="KW-0689">Ribosomal protein</keyword>
<keyword id="KW-0694">RNA-binding</keyword>
<keyword id="KW-0699">rRNA-binding</keyword>
<evidence type="ECO:0000255" key="1">
    <source>
        <dbReference type="HAMAP-Rule" id="MF_00382"/>
    </source>
</evidence>
<evidence type="ECO:0000305" key="2"/>
<organism>
    <name type="scientific">Dehalococcoides mccartyi (strain CBDB1)</name>
    <dbReference type="NCBI Taxonomy" id="255470"/>
    <lineage>
        <taxon>Bacteria</taxon>
        <taxon>Bacillati</taxon>
        <taxon>Chloroflexota</taxon>
        <taxon>Dehalococcoidia</taxon>
        <taxon>Dehalococcoidales</taxon>
        <taxon>Dehalococcoidaceae</taxon>
        <taxon>Dehalococcoides</taxon>
    </lineage>
</organism>
<sequence length="119" mass="12901">MARIKGGLATHKRHKKVLALTKGHASTRHSLFKRAHESMVHAMSYAFAHRRARKGDMRRLWITRINAAARAEGLTYGELISGLKVAGIDINRKVLADMAISDTVAFAAVAAKAAAAKAN</sequence>
<name>RL20_DEHMC</name>
<dbReference type="EMBL" id="AJ965256">
    <property type="protein sequence ID" value="CAI82885.1"/>
    <property type="molecule type" value="Genomic_DNA"/>
</dbReference>
<dbReference type="RefSeq" id="WP_011309236.1">
    <property type="nucleotide sequence ID" value="NC_007356.1"/>
</dbReference>
<dbReference type="SMR" id="Q3ZXB8"/>
<dbReference type="KEGG" id="deh:cbdbA723"/>
<dbReference type="HOGENOM" id="CLU_123265_0_1_0"/>
<dbReference type="Proteomes" id="UP000000433">
    <property type="component" value="Chromosome"/>
</dbReference>
<dbReference type="GO" id="GO:1990904">
    <property type="term" value="C:ribonucleoprotein complex"/>
    <property type="evidence" value="ECO:0007669"/>
    <property type="project" value="UniProtKB-KW"/>
</dbReference>
<dbReference type="GO" id="GO:0005840">
    <property type="term" value="C:ribosome"/>
    <property type="evidence" value="ECO:0007669"/>
    <property type="project" value="UniProtKB-KW"/>
</dbReference>
<dbReference type="GO" id="GO:0019843">
    <property type="term" value="F:rRNA binding"/>
    <property type="evidence" value="ECO:0007669"/>
    <property type="project" value="UniProtKB-UniRule"/>
</dbReference>
<dbReference type="GO" id="GO:0003735">
    <property type="term" value="F:structural constituent of ribosome"/>
    <property type="evidence" value="ECO:0007669"/>
    <property type="project" value="InterPro"/>
</dbReference>
<dbReference type="GO" id="GO:0000027">
    <property type="term" value="P:ribosomal large subunit assembly"/>
    <property type="evidence" value="ECO:0007669"/>
    <property type="project" value="UniProtKB-UniRule"/>
</dbReference>
<dbReference type="GO" id="GO:0006412">
    <property type="term" value="P:translation"/>
    <property type="evidence" value="ECO:0007669"/>
    <property type="project" value="InterPro"/>
</dbReference>
<dbReference type="CDD" id="cd07026">
    <property type="entry name" value="Ribosomal_L20"/>
    <property type="match status" value="1"/>
</dbReference>
<dbReference type="FunFam" id="1.10.1900.20:FF:000001">
    <property type="entry name" value="50S ribosomal protein L20"/>
    <property type="match status" value="1"/>
</dbReference>
<dbReference type="Gene3D" id="6.10.160.10">
    <property type="match status" value="1"/>
</dbReference>
<dbReference type="Gene3D" id="1.10.1900.20">
    <property type="entry name" value="Ribosomal protein L20"/>
    <property type="match status" value="1"/>
</dbReference>
<dbReference type="HAMAP" id="MF_00382">
    <property type="entry name" value="Ribosomal_bL20"/>
    <property type="match status" value="1"/>
</dbReference>
<dbReference type="InterPro" id="IPR005813">
    <property type="entry name" value="Ribosomal_bL20"/>
</dbReference>
<dbReference type="InterPro" id="IPR049946">
    <property type="entry name" value="RIBOSOMAL_L20_CS"/>
</dbReference>
<dbReference type="InterPro" id="IPR035566">
    <property type="entry name" value="Ribosomal_protein_bL20_C"/>
</dbReference>
<dbReference type="NCBIfam" id="TIGR01032">
    <property type="entry name" value="rplT_bact"/>
    <property type="match status" value="1"/>
</dbReference>
<dbReference type="PANTHER" id="PTHR10986">
    <property type="entry name" value="39S RIBOSOMAL PROTEIN L20"/>
    <property type="match status" value="1"/>
</dbReference>
<dbReference type="Pfam" id="PF00453">
    <property type="entry name" value="Ribosomal_L20"/>
    <property type="match status" value="1"/>
</dbReference>
<dbReference type="PRINTS" id="PR00062">
    <property type="entry name" value="RIBOSOMALL20"/>
</dbReference>
<dbReference type="SUPFAM" id="SSF74731">
    <property type="entry name" value="Ribosomal protein L20"/>
    <property type="match status" value="1"/>
</dbReference>
<dbReference type="PROSITE" id="PS00937">
    <property type="entry name" value="RIBOSOMAL_L20"/>
    <property type="match status" value="1"/>
</dbReference>
<feature type="chain" id="PRO_0000243676" description="Large ribosomal subunit protein bL20">
    <location>
        <begin position="1"/>
        <end position="119"/>
    </location>
</feature>
<accession>Q3ZXB8</accession>
<proteinExistence type="inferred from homology"/>
<reference key="1">
    <citation type="journal article" date="2005" name="Nat. Biotechnol.">
        <title>Genome sequence of the chlorinated compound-respiring bacterium Dehalococcoides species strain CBDB1.</title>
        <authorList>
            <person name="Kube M."/>
            <person name="Beck A."/>
            <person name="Zinder S.H."/>
            <person name="Kuhl H."/>
            <person name="Reinhardt R."/>
            <person name="Adrian L."/>
        </authorList>
    </citation>
    <scope>NUCLEOTIDE SEQUENCE [LARGE SCALE GENOMIC DNA]</scope>
    <source>
        <strain>CBDB1</strain>
    </source>
</reference>
<comment type="function">
    <text evidence="1">Binds directly to 23S ribosomal RNA and is necessary for the in vitro assembly process of the 50S ribosomal subunit. It is not involved in the protein synthesizing functions of that subunit.</text>
</comment>
<comment type="similarity">
    <text evidence="1">Belongs to the bacterial ribosomal protein bL20 family.</text>
</comment>
<protein>
    <recommendedName>
        <fullName evidence="1">Large ribosomal subunit protein bL20</fullName>
    </recommendedName>
    <alternativeName>
        <fullName evidence="2">50S ribosomal protein L20</fullName>
    </alternativeName>
</protein>
<gene>
    <name evidence="1" type="primary">rplT</name>
    <name type="ordered locus">cbdbA723</name>
</gene>